<sequence length="247" mass="26308">MAGHSKWANIQHRKGRQDAKRGKLFTKAAKEIIIAAKGGGDPASNARLRAAIAAAKAVNLPKDKIDNAIKKGTGELAGGDILEISYEGYGPGGVALIVEAATDNRNRTVAEVRHILSKHGGSMGEAGCVGWMFERKGVITLDGGKYTEDQVMEAALEAGADDVRDEGGTWEIHTAVSDFAAVRDALEAAGMEMDSAELSMIPQNTVEVDAETGRKLMRLVDALEDNDDVQNVHANFDLPDEVLAELE</sequence>
<dbReference type="EMBL" id="CP001197">
    <property type="protein sequence ID" value="ACL10137.1"/>
    <property type="molecule type" value="Genomic_DNA"/>
</dbReference>
<dbReference type="SMR" id="B8DNJ5"/>
<dbReference type="STRING" id="883.DvMF_3201"/>
<dbReference type="KEGG" id="dvm:DvMF_3201"/>
<dbReference type="eggNOG" id="COG0217">
    <property type="taxonomic scope" value="Bacteria"/>
</dbReference>
<dbReference type="HOGENOM" id="CLU_062974_2_2_7"/>
<dbReference type="OrthoDB" id="9781053at2"/>
<dbReference type="GO" id="GO:0005829">
    <property type="term" value="C:cytosol"/>
    <property type="evidence" value="ECO:0007669"/>
    <property type="project" value="TreeGrafter"/>
</dbReference>
<dbReference type="GO" id="GO:0003677">
    <property type="term" value="F:DNA binding"/>
    <property type="evidence" value="ECO:0007669"/>
    <property type="project" value="UniProtKB-UniRule"/>
</dbReference>
<dbReference type="GO" id="GO:0006355">
    <property type="term" value="P:regulation of DNA-templated transcription"/>
    <property type="evidence" value="ECO:0007669"/>
    <property type="project" value="UniProtKB-UniRule"/>
</dbReference>
<dbReference type="FunFam" id="1.10.10.200:FF:000002">
    <property type="entry name" value="Probable transcriptional regulatory protein CLM62_37755"/>
    <property type="match status" value="1"/>
</dbReference>
<dbReference type="FunFam" id="3.30.70.980:FF:000002">
    <property type="entry name" value="Probable transcriptional regulatory protein YebC"/>
    <property type="match status" value="1"/>
</dbReference>
<dbReference type="Gene3D" id="1.10.10.200">
    <property type="match status" value="1"/>
</dbReference>
<dbReference type="Gene3D" id="3.30.70.980">
    <property type="match status" value="2"/>
</dbReference>
<dbReference type="HAMAP" id="MF_00693">
    <property type="entry name" value="Transcrip_reg_TACO1"/>
    <property type="match status" value="1"/>
</dbReference>
<dbReference type="InterPro" id="IPR017856">
    <property type="entry name" value="Integrase-like_N"/>
</dbReference>
<dbReference type="InterPro" id="IPR048300">
    <property type="entry name" value="TACO1_YebC-like_2nd/3rd_dom"/>
</dbReference>
<dbReference type="InterPro" id="IPR049083">
    <property type="entry name" value="TACO1_YebC_N"/>
</dbReference>
<dbReference type="InterPro" id="IPR002876">
    <property type="entry name" value="Transcrip_reg_TACO1-like"/>
</dbReference>
<dbReference type="InterPro" id="IPR026564">
    <property type="entry name" value="Transcrip_reg_TACO1-like_dom3"/>
</dbReference>
<dbReference type="InterPro" id="IPR029072">
    <property type="entry name" value="YebC-like"/>
</dbReference>
<dbReference type="NCBIfam" id="NF001030">
    <property type="entry name" value="PRK00110.1"/>
    <property type="match status" value="1"/>
</dbReference>
<dbReference type="NCBIfam" id="NF009044">
    <property type="entry name" value="PRK12378.1"/>
    <property type="match status" value="1"/>
</dbReference>
<dbReference type="NCBIfam" id="TIGR01033">
    <property type="entry name" value="YebC/PmpR family DNA-binding transcriptional regulator"/>
    <property type="match status" value="1"/>
</dbReference>
<dbReference type="PANTHER" id="PTHR12532:SF6">
    <property type="entry name" value="TRANSCRIPTIONAL REGULATORY PROTEIN YEBC-RELATED"/>
    <property type="match status" value="1"/>
</dbReference>
<dbReference type="PANTHER" id="PTHR12532">
    <property type="entry name" value="TRANSLATIONAL ACTIVATOR OF CYTOCHROME C OXIDASE 1"/>
    <property type="match status" value="1"/>
</dbReference>
<dbReference type="Pfam" id="PF20772">
    <property type="entry name" value="TACO1_YebC_N"/>
    <property type="match status" value="1"/>
</dbReference>
<dbReference type="Pfam" id="PF01709">
    <property type="entry name" value="Transcrip_reg"/>
    <property type="match status" value="1"/>
</dbReference>
<dbReference type="SUPFAM" id="SSF75625">
    <property type="entry name" value="YebC-like"/>
    <property type="match status" value="1"/>
</dbReference>
<comment type="subcellular location">
    <subcellularLocation>
        <location evidence="1">Cytoplasm</location>
    </subcellularLocation>
</comment>
<comment type="similarity">
    <text evidence="1">Belongs to the TACO1 family.</text>
</comment>
<feature type="chain" id="PRO_1000132187" description="Probable transcriptional regulatory protein DvMF_3201">
    <location>
        <begin position="1"/>
        <end position="247"/>
    </location>
</feature>
<feature type="region of interest" description="Disordered" evidence="2">
    <location>
        <begin position="1"/>
        <end position="21"/>
    </location>
</feature>
<protein>
    <recommendedName>
        <fullName evidence="1">Probable transcriptional regulatory protein DvMF_3201</fullName>
    </recommendedName>
</protein>
<evidence type="ECO:0000255" key="1">
    <source>
        <dbReference type="HAMAP-Rule" id="MF_00693"/>
    </source>
</evidence>
<evidence type="ECO:0000256" key="2">
    <source>
        <dbReference type="SAM" id="MobiDB-lite"/>
    </source>
</evidence>
<name>Y3201_NITV9</name>
<organism>
    <name type="scientific">Nitratidesulfovibrio vulgaris (strain DSM 19637 / Miyazaki F)</name>
    <name type="common">Desulfovibrio vulgaris</name>
    <dbReference type="NCBI Taxonomy" id="883"/>
    <lineage>
        <taxon>Bacteria</taxon>
        <taxon>Pseudomonadati</taxon>
        <taxon>Thermodesulfobacteriota</taxon>
        <taxon>Desulfovibrionia</taxon>
        <taxon>Desulfovibrionales</taxon>
        <taxon>Desulfovibrionaceae</taxon>
        <taxon>Nitratidesulfovibrio</taxon>
    </lineage>
</organism>
<accession>B8DNJ5</accession>
<proteinExistence type="inferred from homology"/>
<keyword id="KW-0963">Cytoplasm</keyword>
<keyword id="KW-0238">DNA-binding</keyword>
<keyword id="KW-0804">Transcription</keyword>
<keyword id="KW-0805">Transcription regulation</keyword>
<gene>
    <name type="ordered locus">DvMF_3201</name>
</gene>
<reference key="1">
    <citation type="submission" date="2008-10" db="EMBL/GenBank/DDBJ databases">
        <title>Complete sequence of Desulfovibrio vulgaris str. 'Miyazaki F'.</title>
        <authorList>
            <person name="Lucas S."/>
            <person name="Copeland A."/>
            <person name="Lapidus A."/>
            <person name="Glavina del Rio T."/>
            <person name="Dalin E."/>
            <person name="Tice H."/>
            <person name="Bruce D."/>
            <person name="Goodwin L."/>
            <person name="Pitluck S."/>
            <person name="Sims D."/>
            <person name="Brettin T."/>
            <person name="Detter J.C."/>
            <person name="Han C."/>
            <person name="Larimer F."/>
            <person name="Land M."/>
            <person name="Hauser L."/>
            <person name="Kyrpides N."/>
            <person name="Mikhailova N."/>
            <person name="Hazen T.C."/>
            <person name="Richardson P."/>
        </authorList>
    </citation>
    <scope>NUCLEOTIDE SEQUENCE [LARGE SCALE GENOMIC DNA]</scope>
    <source>
        <strain>DSM 19637 / Miyazaki F</strain>
    </source>
</reference>